<proteinExistence type="inferred from homology"/>
<organism>
    <name type="scientific">Arthroderma otae (strain ATCC MYA-4605 / CBS 113480)</name>
    <name type="common">Microsporum canis</name>
    <dbReference type="NCBI Taxonomy" id="554155"/>
    <lineage>
        <taxon>Eukaryota</taxon>
        <taxon>Fungi</taxon>
        <taxon>Dikarya</taxon>
        <taxon>Ascomycota</taxon>
        <taxon>Pezizomycotina</taxon>
        <taxon>Eurotiomycetes</taxon>
        <taxon>Eurotiomycetidae</taxon>
        <taxon>Onygenales</taxon>
        <taxon>Arthrodermataceae</taxon>
        <taxon>Microsporum</taxon>
    </lineage>
</organism>
<reference key="1">
    <citation type="journal article" date="2012" name="MBio">
        <title>Comparative genome analysis of Trichophyton rubrum and related dermatophytes reveals candidate genes involved in infection.</title>
        <authorList>
            <person name="Martinez D.A."/>
            <person name="Oliver B.G."/>
            <person name="Graeser Y."/>
            <person name="Goldberg J.M."/>
            <person name="Li W."/>
            <person name="Martinez-Rossi N.M."/>
            <person name="Monod M."/>
            <person name="Shelest E."/>
            <person name="Barton R.C."/>
            <person name="Birch E."/>
            <person name="Brakhage A.A."/>
            <person name="Chen Z."/>
            <person name="Gurr S.J."/>
            <person name="Heiman D."/>
            <person name="Heitman J."/>
            <person name="Kosti I."/>
            <person name="Rossi A."/>
            <person name="Saif S."/>
            <person name="Samalova M."/>
            <person name="Saunders C.W."/>
            <person name="Shea T."/>
            <person name="Summerbell R.C."/>
            <person name="Xu J."/>
            <person name="Young S."/>
            <person name="Zeng Q."/>
            <person name="Birren B.W."/>
            <person name="Cuomo C.A."/>
            <person name="White T.C."/>
        </authorList>
    </citation>
    <scope>NUCLEOTIDE SEQUENCE [LARGE SCALE GENOMIC DNA]</scope>
    <source>
        <strain>ATCC MYA-4605 / CBS 113480</strain>
    </source>
</reference>
<sequence length="401" mass="42034">MLFLKAVIAILSVLPAADAAAILNFENKQGIIPDSYIVVLKNDISSDDFKSHVAWATGVHNANVAKRDVPLAGMQRTFEMDIFKGYSGAFDRATLDDLLKNEQVDYIEPDRMASAQGWTTQGNAPSWGLGRISHQQRGNTDYVFDSTAGRGITIYGVDSGIDILHAEFGGRATWGANFFNNINTDEFGHGTHTAATFGGTNYGVAKNVNIVAVKVLGDQGQGPWSSIIDGLQWAVNDAREKGILGKAIINFSVGGPSSRAADNALTAAHNAGVFVSAAAGNDGADALNYTPGTARSICVIGNINENDYRFTGNGASNWGTRIDLWAPGTDILSALPQGRYGPMTGTSMAAPHVAGSVAILMASGGVSTAEACGVLKDMSTPSVIEPGQGSTNRLLYNGSGQ</sequence>
<keyword id="KW-0325">Glycoprotein</keyword>
<keyword id="KW-0378">Hydrolase</keyword>
<keyword id="KW-0645">Protease</keyword>
<keyword id="KW-1185">Reference proteome</keyword>
<keyword id="KW-0964">Secreted</keyword>
<keyword id="KW-0720">Serine protease</keyword>
<keyword id="KW-0732">Signal</keyword>
<keyword id="KW-0843">Virulence</keyword>
<keyword id="KW-0865">Zymogen</keyword>
<evidence type="ECO:0000250" key="1"/>
<evidence type="ECO:0000255" key="2"/>
<evidence type="ECO:0000255" key="3">
    <source>
        <dbReference type="PROSITE-ProRule" id="PRU01240"/>
    </source>
</evidence>
<evidence type="ECO:0000305" key="4"/>
<accession>C5FX37</accession>
<name>SUB10_ARTOC</name>
<gene>
    <name type="primary">SUB10</name>
    <name type="ORF">MCYG_07696</name>
</gene>
<feature type="signal peptide" evidence="2">
    <location>
        <begin position="1"/>
        <end position="19"/>
    </location>
</feature>
<feature type="propeptide" id="PRO_0000406394" evidence="1">
    <location>
        <begin position="20"/>
        <end position="116"/>
    </location>
</feature>
<feature type="chain" id="PRO_0000406395" description="Subtilisin-like protease 10">
    <location>
        <begin position="117"/>
        <end position="401"/>
    </location>
</feature>
<feature type="domain" description="Inhibitor I9" evidence="2">
    <location>
        <begin position="35"/>
        <end position="112"/>
    </location>
</feature>
<feature type="domain" description="Peptidase S8" evidence="3">
    <location>
        <begin position="126"/>
        <end position="401"/>
    </location>
</feature>
<feature type="active site" description="Charge relay system" evidence="3">
    <location>
        <position position="158"/>
    </location>
</feature>
<feature type="active site" description="Charge relay system" evidence="3">
    <location>
        <position position="189"/>
    </location>
</feature>
<feature type="active site" description="Charge relay system" evidence="3">
    <location>
        <position position="347"/>
    </location>
</feature>
<feature type="glycosylation site" description="N-linked (GlcNAc...) asparagine" evidence="2">
    <location>
        <position position="250"/>
    </location>
</feature>
<feature type="glycosylation site" description="N-linked (GlcNAc...) asparagine" evidence="2">
    <location>
        <position position="397"/>
    </location>
</feature>
<dbReference type="EC" id="3.4.21.-"/>
<dbReference type="EMBL" id="DS995707">
    <property type="protein sequence ID" value="EEQ34877.1"/>
    <property type="molecule type" value="Genomic_DNA"/>
</dbReference>
<dbReference type="RefSeq" id="XP_002843913.1">
    <property type="nucleotide sequence ID" value="XM_002843867.1"/>
</dbReference>
<dbReference type="SMR" id="C5FX37"/>
<dbReference type="STRING" id="554155.C5FX37"/>
<dbReference type="GlyCosmos" id="C5FX37">
    <property type="glycosylation" value="2 sites, No reported glycans"/>
</dbReference>
<dbReference type="GeneID" id="9228037"/>
<dbReference type="VEuPathDB" id="FungiDB:MCYG_07696"/>
<dbReference type="eggNOG" id="KOG1153">
    <property type="taxonomic scope" value="Eukaryota"/>
</dbReference>
<dbReference type="HOGENOM" id="CLU_011263_1_3_1"/>
<dbReference type="OMA" id="HEHVAHV"/>
<dbReference type="OrthoDB" id="206201at2759"/>
<dbReference type="Proteomes" id="UP000002035">
    <property type="component" value="Unassembled WGS sequence"/>
</dbReference>
<dbReference type="GO" id="GO:0005576">
    <property type="term" value="C:extracellular region"/>
    <property type="evidence" value="ECO:0007669"/>
    <property type="project" value="UniProtKB-SubCell"/>
</dbReference>
<dbReference type="GO" id="GO:0004252">
    <property type="term" value="F:serine-type endopeptidase activity"/>
    <property type="evidence" value="ECO:0007669"/>
    <property type="project" value="InterPro"/>
</dbReference>
<dbReference type="GO" id="GO:0006508">
    <property type="term" value="P:proteolysis"/>
    <property type="evidence" value="ECO:0007669"/>
    <property type="project" value="UniProtKB-KW"/>
</dbReference>
<dbReference type="CDD" id="cd04077">
    <property type="entry name" value="Peptidases_S8_PCSK9_ProteinaseK_like"/>
    <property type="match status" value="1"/>
</dbReference>
<dbReference type="FunFam" id="3.40.50.200:FF:000014">
    <property type="entry name" value="Proteinase K"/>
    <property type="match status" value="1"/>
</dbReference>
<dbReference type="Gene3D" id="3.30.70.80">
    <property type="entry name" value="Peptidase S8 propeptide/proteinase inhibitor I9"/>
    <property type="match status" value="1"/>
</dbReference>
<dbReference type="Gene3D" id="3.40.50.200">
    <property type="entry name" value="Peptidase S8/S53 domain"/>
    <property type="match status" value="1"/>
</dbReference>
<dbReference type="InterPro" id="IPR034193">
    <property type="entry name" value="PCSK9_ProteinaseK-like"/>
</dbReference>
<dbReference type="InterPro" id="IPR000209">
    <property type="entry name" value="Peptidase_S8/S53_dom"/>
</dbReference>
<dbReference type="InterPro" id="IPR036852">
    <property type="entry name" value="Peptidase_S8/S53_dom_sf"/>
</dbReference>
<dbReference type="InterPro" id="IPR023828">
    <property type="entry name" value="Peptidase_S8_Ser-AS"/>
</dbReference>
<dbReference type="InterPro" id="IPR050131">
    <property type="entry name" value="Peptidase_S8_subtilisin-like"/>
</dbReference>
<dbReference type="InterPro" id="IPR015500">
    <property type="entry name" value="Peptidase_S8_subtilisin-rel"/>
</dbReference>
<dbReference type="InterPro" id="IPR010259">
    <property type="entry name" value="S8pro/Inhibitor_I9"/>
</dbReference>
<dbReference type="InterPro" id="IPR037045">
    <property type="entry name" value="S8pro/Inhibitor_I9_sf"/>
</dbReference>
<dbReference type="PANTHER" id="PTHR43806">
    <property type="entry name" value="PEPTIDASE S8"/>
    <property type="match status" value="1"/>
</dbReference>
<dbReference type="PANTHER" id="PTHR43806:SF66">
    <property type="entry name" value="SERIN ENDOPEPTIDASE"/>
    <property type="match status" value="1"/>
</dbReference>
<dbReference type="Pfam" id="PF05922">
    <property type="entry name" value="Inhibitor_I9"/>
    <property type="match status" value="1"/>
</dbReference>
<dbReference type="Pfam" id="PF00082">
    <property type="entry name" value="Peptidase_S8"/>
    <property type="match status" value="1"/>
</dbReference>
<dbReference type="PRINTS" id="PR00723">
    <property type="entry name" value="SUBTILISIN"/>
</dbReference>
<dbReference type="SUPFAM" id="SSF54897">
    <property type="entry name" value="Protease propeptides/inhibitors"/>
    <property type="match status" value="1"/>
</dbReference>
<dbReference type="SUPFAM" id="SSF52743">
    <property type="entry name" value="Subtilisin-like"/>
    <property type="match status" value="1"/>
</dbReference>
<dbReference type="PROSITE" id="PS51892">
    <property type="entry name" value="SUBTILASE"/>
    <property type="match status" value="1"/>
</dbReference>
<dbReference type="PROSITE" id="PS00138">
    <property type="entry name" value="SUBTILASE_SER"/>
    <property type="match status" value="1"/>
</dbReference>
<comment type="function">
    <text evidence="1">Secreted subtilisin-like serine protease with keratinolytic activity that contributes to pathogenicity.</text>
</comment>
<comment type="subcellular location">
    <subcellularLocation>
        <location evidence="1">Secreted</location>
    </subcellularLocation>
</comment>
<comment type="similarity">
    <text evidence="4">Belongs to the peptidase S8 family.</text>
</comment>
<protein>
    <recommendedName>
        <fullName>Subtilisin-like protease 10</fullName>
        <ecNumber>3.4.21.-</ecNumber>
    </recommendedName>
</protein>